<dbReference type="EMBL" id="CP000964">
    <property type="protein sequence ID" value="ACI11678.1"/>
    <property type="molecule type" value="Genomic_DNA"/>
</dbReference>
<dbReference type="SMR" id="B5Y369"/>
<dbReference type="KEGG" id="kpe:KPK_5138"/>
<dbReference type="HOGENOM" id="CLU_132825_1_1_6"/>
<dbReference type="Proteomes" id="UP000001734">
    <property type="component" value="Chromosome"/>
</dbReference>
<dbReference type="GO" id="GO:0005737">
    <property type="term" value="C:cytoplasm"/>
    <property type="evidence" value="ECO:0007669"/>
    <property type="project" value="UniProtKB-SubCell"/>
</dbReference>
<dbReference type="GO" id="GO:0005524">
    <property type="term" value="F:ATP binding"/>
    <property type="evidence" value="ECO:0007669"/>
    <property type="project" value="InterPro"/>
</dbReference>
<dbReference type="GO" id="GO:0046872">
    <property type="term" value="F:metal ion binding"/>
    <property type="evidence" value="ECO:0007669"/>
    <property type="project" value="TreeGrafter"/>
</dbReference>
<dbReference type="GO" id="GO:0044183">
    <property type="term" value="F:protein folding chaperone"/>
    <property type="evidence" value="ECO:0007669"/>
    <property type="project" value="InterPro"/>
</dbReference>
<dbReference type="GO" id="GO:0051087">
    <property type="term" value="F:protein-folding chaperone binding"/>
    <property type="evidence" value="ECO:0007669"/>
    <property type="project" value="TreeGrafter"/>
</dbReference>
<dbReference type="GO" id="GO:0051082">
    <property type="term" value="F:unfolded protein binding"/>
    <property type="evidence" value="ECO:0007669"/>
    <property type="project" value="TreeGrafter"/>
</dbReference>
<dbReference type="GO" id="GO:0051085">
    <property type="term" value="P:chaperone cofactor-dependent protein refolding"/>
    <property type="evidence" value="ECO:0007669"/>
    <property type="project" value="TreeGrafter"/>
</dbReference>
<dbReference type="CDD" id="cd00320">
    <property type="entry name" value="cpn10"/>
    <property type="match status" value="1"/>
</dbReference>
<dbReference type="FunFam" id="2.30.33.40:FF:000001">
    <property type="entry name" value="10 kDa chaperonin"/>
    <property type="match status" value="1"/>
</dbReference>
<dbReference type="Gene3D" id="2.30.33.40">
    <property type="entry name" value="GroES chaperonin"/>
    <property type="match status" value="1"/>
</dbReference>
<dbReference type="HAMAP" id="MF_00580">
    <property type="entry name" value="CH10"/>
    <property type="match status" value="1"/>
</dbReference>
<dbReference type="InterPro" id="IPR020818">
    <property type="entry name" value="Chaperonin_GroES"/>
</dbReference>
<dbReference type="InterPro" id="IPR037124">
    <property type="entry name" value="Chaperonin_GroES_sf"/>
</dbReference>
<dbReference type="InterPro" id="IPR018369">
    <property type="entry name" value="Chaprnonin_Cpn10_CS"/>
</dbReference>
<dbReference type="InterPro" id="IPR011032">
    <property type="entry name" value="GroES-like_sf"/>
</dbReference>
<dbReference type="NCBIfam" id="NF001526">
    <property type="entry name" value="PRK00364.1-1"/>
    <property type="match status" value="1"/>
</dbReference>
<dbReference type="NCBIfam" id="NF001527">
    <property type="entry name" value="PRK00364.1-2"/>
    <property type="match status" value="1"/>
</dbReference>
<dbReference type="NCBIfam" id="NF001531">
    <property type="entry name" value="PRK00364.2-2"/>
    <property type="match status" value="1"/>
</dbReference>
<dbReference type="PANTHER" id="PTHR10772">
    <property type="entry name" value="10 KDA HEAT SHOCK PROTEIN"/>
    <property type="match status" value="1"/>
</dbReference>
<dbReference type="PANTHER" id="PTHR10772:SF58">
    <property type="entry name" value="CO-CHAPERONIN GROES"/>
    <property type="match status" value="1"/>
</dbReference>
<dbReference type="Pfam" id="PF00166">
    <property type="entry name" value="Cpn10"/>
    <property type="match status" value="1"/>
</dbReference>
<dbReference type="PRINTS" id="PR00297">
    <property type="entry name" value="CHAPERONIN10"/>
</dbReference>
<dbReference type="SMART" id="SM00883">
    <property type="entry name" value="Cpn10"/>
    <property type="match status" value="1"/>
</dbReference>
<dbReference type="SUPFAM" id="SSF50129">
    <property type="entry name" value="GroES-like"/>
    <property type="match status" value="1"/>
</dbReference>
<dbReference type="PROSITE" id="PS00681">
    <property type="entry name" value="CHAPERONINS_CPN10"/>
    <property type="match status" value="1"/>
</dbReference>
<keyword id="KW-0143">Chaperone</keyword>
<keyword id="KW-0963">Cytoplasm</keyword>
<accession>B5Y369</accession>
<sequence length="97" mass="10360">MSIRPLHDRVIVKRKEVETKSAGGIVLTGSAAAKSTRGEIIAVGKGRILENGTVQPLDVKVGDIVIFNDGYGVKSEKIDNEEVLIMSESDILAIVEA</sequence>
<evidence type="ECO:0000255" key="1">
    <source>
        <dbReference type="HAMAP-Rule" id="MF_00580"/>
    </source>
</evidence>
<feature type="chain" id="PRO_1000129672" description="Co-chaperonin GroES">
    <location>
        <begin position="1"/>
        <end position="97"/>
    </location>
</feature>
<gene>
    <name evidence="1" type="primary">groES</name>
    <name evidence="1" type="synonym">groS</name>
    <name type="ordered locus">KPK_5138</name>
</gene>
<proteinExistence type="inferred from homology"/>
<protein>
    <recommendedName>
        <fullName evidence="1">Co-chaperonin GroES</fullName>
    </recommendedName>
    <alternativeName>
        <fullName evidence="1">10 kDa chaperonin</fullName>
    </alternativeName>
    <alternativeName>
        <fullName evidence="1">Chaperonin-10</fullName>
        <shortName evidence="1">Cpn10</shortName>
    </alternativeName>
</protein>
<name>CH10_KLEP3</name>
<reference key="1">
    <citation type="journal article" date="2008" name="PLoS Genet.">
        <title>Complete genome sequence of the N2-fixing broad host range endophyte Klebsiella pneumoniae 342 and virulence predictions verified in mice.</title>
        <authorList>
            <person name="Fouts D.E."/>
            <person name="Tyler H.L."/>
            <person name="DeBoy R.T."/>
            <person name="Daugherty S."/>
            <person name="Ren Q."/>
            <person name="Badger J.H."/>
            <person name="Durkin A.S."/>
            <person name="Huot H."/>
            <person name="Shrivastava S."/>
            <person name="Kothari S."/>
            <person name="Dodson R.J."/>
            <person name="Mohamoud Y."/>
            <person name="Khouri H."/>
            <person name="Roesch L.F.W."/>
            <person name="Krogfelt K.A."/>
            <person name="Struve C."/>
            <person name="Triplett E.W."/>
            <person name="Methe B.A."/>
        </authorList>
    </citation>
    <scope>NUCLEOTIDE SEQUENCE [LARGE SCALE GENOMIC DNA]</scope>
    <source>
        <strain>342</strain>
    </source>
</reference>
<comment type="function">
    <text evidence="1">Together with the chaperonin GroEL, plays an essential role in assisting protein folding. The GroEL-GroES system forms a nano-cage that allows encapsulation of the non-native substrate proteins and provides a physical environment optimized to promote and accelerate protein folding. GroES binds to the apical surface of the GroEL ring, thereby capping the opening of the GroEL channel.</text>
</comment>
<comment type="subunit">
    <text evidence="1">Heptamer of 7 subunits arranged in a ring. Interacts with the chaperonin GroEL.</text>
</comment>
<comment type="subcellular location">
    <subcellularLocation>
        <location evidence="1">Cytoplasm</location>
    </subcellularLocation>
</comment>
<comment type="similarity">
    <text evidence="1">Belongs to the GroES chaperonin family.</text>
</comment>
<organism>
    <name type="scientific">Klebsiella pneumoniae (strain 342)</name>
    <dbReference type="NCBI Taxonomy" id="507522"/>
    <lineage>
        <taxon>Bacteria</taxon>
        <taxon>Pseudomonadati</taxon>
        <taxon>Pseudomonadota</taxon>
        <taxon>Gammaproteobacteria</taxon>
        <taxon>Enterobacterales</taxon>
        <taxon>Enterobacteriaceae</taxon>
        <taxon>Klebsiella/Raoultella group</taxon>
        <taxon>Klebsiella</taxon>
        <taxon>Klebsiella pneumoniae complex</taxon>
    </lineage>
</organism>